<reference key="1">
    <citation type="journal article" date="2000" name="Nature">
        <title>Sequence and analysis of chromosome 1 of the plant Arabidopsis thaliana.</title>
        <authorList>
            <person name="Theologis A."/>
            <person name="Ecker J.R."/>
            <person name="Palm C.J."/>
            <person name="Federspiel N.A."/>
            <person name="Kaul S."/>
            <person name="White O."/>
            <person name="Alonso J."/>
            <person name="Altafi H."/>
            <person name="Araujo R."/>
            <person name="Bowman C.L."/>
            <person name="Brooks S.Y."/>
            <person name="Buehler E."/>
            <person name="Chan A."/>
            <person name="Chao Q."/>
            <person name="Chen H."/>
            <person name="Cheuk R.F."/>
            <person name="Chin C.W."/>
            <person name="Chung M.K."/>
            <person name="Conn L."/>
            <person name="Conway A.B."/>
            <person name="Conway A.R."/>
            <person name="Creasy T.H."/>
            <person name="Dewar K."/>
            <person name="Dunn P."/>
            <person name="Etgu P."/>
            <person name="Feldblyum T.V."/>
            <person name="Feng J.-D."/>
            <person name="Fong B."/>
            <person name="Fujii C.Y."/>
            <person name="Gill J.E."/>
            <person name="Goldsmith A.D."/>
            <person name="Haas B."/>
            <person name="Hansen N.F."/>
            <person name="Hughes B."/>
            <person name="Huizar L."/>
            <person name="Hunter J.L."/>
            <person name="Jenkins J."/>
            <person name="Johnson-Hopson C."/>
            <person name="Khan S."/>
            <person name="Khaykin E."/>
            <person name="Kim C.J."/>
            <person name="Koo H.L."/>
            <person name="Kremenetskaia I."/>
            <person name="Kurtz D.B."/>
            <person name="Kwan A."/>
            <person name="Lam B."/>
            <person name="Langin-Hooper S."/>
            <person name="Lee A."/>
            <person name="Lee J.M."/>
            <person name="Lenz C.A."/>
            <person name="Li J.H."/>
            <person name="Li Y.-P."/>
            <person name="Lin X."/>
            <person name="Liu S.X."/>
            <person name="Liu Z.A."/>
            <person name="Luros J.S."/>
            <person name="Maiti R."/>
            <person name="Marziali A."/>
            <person name="Militscher J."/>
            <person name="Miranda M."/>
            <person name="Nguyen M."/>
            <person name="Nierman W.C."/>
            <person name="Osborne B.I."/>
            <person name="Pai G."/>
            <person name="Peterson J."/>
            <person name="Pham P.K."/>
            <person name="Rizzo M."/>
            <person name="Rooney T."/>
            <person name="Rowley D."/>
            <person name="Sakano H."/>
            <person name="Salzberg S.L."/>
            <person name="Schwartz J.R."/>
            <person name="Shinn P."/>
            <person name="Southwick A.M."/>
            <person name="Sun H."/>
            <person name="Tallon L.J."/>
            <person name="Tambunga G."/>
            <person name="Toriumi M.J."/>
            <person name="Town C.D."/>
            <person name="Utterback T."/>
            <person name="Van Aken S."/>
            <person name="Vaysberg M."/>
            <person name="Vysotskaia V.S."/>
            <person name="Walker M."/>
            <person name="Wu D."/>
            <person name="Yu G."/>
            <person name="Fraser C.M."/>
            <person name="Venter J.C."/>
            <person name="Davis R.W."/>
        </authorList>
    </citation>
    <scope>NUCLEOTIDE SEQUENCE [LARGE SCALE GENOMIC DNA]</scope>
    <source>
        <strain>cv. Columbia</strain>
    </source>
</reference>
<reference key="2">
    <citation type="journal article" date="2017" name="Plant J.">
        <title>Araport11: a complete reannotation of the Arabidopsis thaliana reference genome.</title>
        <authorList>
            <person name="Cheng C.Y."/>
            <person name="Krishnakumar V."/>
            <person name="Chan A.P."/>
            <person name="Thibaud-Nissen F."/>
            <person name="Schobel S."/>
            <person name="Town C.D."/>
        </authorList>
    </citation>
    <scope>GENOME REANNOTATION</scope>
    <source>
        <strain>cv. Columbia</strain>
    </source>
</reference>
<reference key="3">
    <citation type="journal article" date="2003" name="Science">
        <title>Empirical analysis of transcriptional activity in the Arabidopsis genome.</title>
        <authorList>
            <person name="Yamada K."/>
            <person name="Lim J."/>
            <person name="Dale J.M."/>
            <person name="Chen H."/>
            <person name="Shinn P."/>
            <person name="Palm C.J."/>
            <person name="Southwick A.M."/>
            <person name="Wu H.C."/>
            <person name="Kim C.J."/>
            <person name="Nguyen M."/>
            <person name="Pham P.K."/>
            <person name="Cheuk R.F."/>
            <person name="Karlin-Newmann G."/>
            <person name="Liu S.X."/>
            <person name="Lam B."/>
            <person name="Sakano H."/>
            <person name="Wu T."/>
            <person name="Yu G."/>
            <person name="Miranda M."/>
            <person name="Quach H.L."/>
            <person name="Tripp M."/>
            <person name="Chang C.H."/>
            <person name="Lee J.M."/>
            <person name="Toriumi M.J."/>
            <person name="Chan M.M."/>
            <person name="Tang C.C."/>
            <person name="Onodera C.S."/>
            <person name="Deng J.M."/>
            <person name="Akiyama K."/>
            <person name="Ansari Y."/>
            <person name="Arakawa T."/>
            <person name="Banh J."/>
            <person name="Banno F."/>
            <person name="Bowser L."/>
            <person name="Brooks S.Y."/>
            <person name="Carninci P."/>
            <person name="Chao Q."/>
            <person name="Choy N."/>
            <person name="Enju A."/>
            <person name="Goldsmith A.D."/>
            <person name="Gurjal M."/>
            <person name="Hansen N.F."/>
            <person name="Hayashizaki Y."/>
            <person name="Johnson-Hopson C."/>
            <person name="Hsuan V.W."/>
            <person name="Iida K."/>
            <person name="Karnes M."/>
            <person name="Khan S."/>
            <person name="Koesema E."/>
            <person name="Ishida J."/>
            <person name="Jiang P.X."/>
            <person name="Jones T."/>
            <person name="Kawai J."/>
            <person name="Kamiya A."/>
            <person name="Meyers C."/>
            <person name="Nakajima M."/>
            <person name="Narusaka M."/>
            <person name="Seki M."/>
            <person name="Sakurai T."/>
            <person name="Satou M."/>
            <person name="Tamse R."/>
            <person name="Vaysberg M."/>
            <person name="Wallender E.K."/>
            <person name="Wong C."/>
            <person name="Yamamura Y."/>
            <person name="Yuan S."/>
            <person name="Shinozaki K."/>
            <person name="Davis R.W."/>
            <person name="Theologis A."/>
            <person name="Ecker J.R."/>
        </authorList>
    </citation>
    <scope>NUCLEOTIDE SEQUENCE [LARGE SCALE MRNA]</scope>
    <source>
        <strain>cv. Columbia</strain>
    </source>
</reference>
<reference key="4">
    <citation type="journal article" date="2004" name="Plant Physiol.">
        <title>Molecular and functional characterization of a family of amino acid transporters from Arabidopsis.</title>
        <authorList>
            <person name="Su Y.-H."/>
            <person name="Frommer W.B."/>
            <person name="Ludewig U."/>
        </authorList>
    </citation>
    <scope>FUNCTION</scope>
    <scope>TISSUE SPECIFICITY</scope>
    <scope>SUBCELLULAR LOCATION</scope>
    <scope>GENE FAMILY</scope>
    <scope>NOMENCLATURE</scope>
    <source>
        <strain>cv. Columbia</strain>
    </source>
</reference>
<dbReference type="EMBL" id="AC007651">
    <property type="protein sequence ID" value="AAD50030.1"/>
    <property type="molecule type" value="Genomic_DNA"/>
</dbReference>
<dbReference type="EMBL" id="CP002684">
    <property type="protein sequence ID" value="AEE29544.1"/>
    <property type="molecule type" value="Genomic_DNA"/>
</dbReference>
<dbReference type="EMBL" id="AY072181">
    <property type="protein sequence ID" value="AAL60003.1"/>
    <property type="molecule type" value="mRNA"/>
</dbReference>
<dbReference type="EMBL" id="AY117296">
    <property type="protein sequence ID" value="AAM51371.1"/>
    <property type="molecule type" value="mRNA"/>
</dbReference>
<dbReference type="PIR" id="A86307">
    <property type="entry name" value="A86307"/>
</dbReference>
<dbReference type="RefSeq" id="NP_173155.1">
    <property type="nucleotide sequence ID" value="NM_101572.4"/>
</dbReference>
<dbReference type="SMR" id="Q9SHH0"/>
<dbReference type="FunCoup" id="Q9SHH0">
    <property type="interactions" value="343"/>
</dbReference>
<dbReference type="STRING" id="3702.Q9SHH0"/>
<dbReference type="TCDB" id="2.A.3.3.11">
    <property type="family name" value="the amino acid-polyamine-organocation (apc) family"/>
</dbReference>
<dbReference type="GlyCosmos" id="Q9SHH0">
    <property type="glycosylation" value="1 site, No reported glycans"/>
</dbReference>
<dbReference type="GlyGen" id="Q9SHH0">
    <property type="glycosylation" value="1 site"/>
</dbReference>
<dbReference type="iPTMnet" id="Q9SHH0"/>
<dbReference type="PaxDb" id="3702-AT1G17120.1"/>
<dbReference type="ProteomicsDB" id="240309"/>
<dbReference type="EnsemblPlants" id="AT1G17120.1">
    <property type="protein sequence ID" value="AT1G17120.1"/>
    <property type="gene ID" value="AT1G17120"/>
</dbReference>
<dbReference type="GeneID" id="838282"/>
<dbReference type="Gramene" id="AT1G17120.1">
    <property type="protein sequence ID" value="AT1G17120.1"/>
    <property type="gene ID" value="AT1G17120"/>
</dbReference>
<dbReference type="KEGG" id="ath:AT1G17120"/>
<dbReference type="Araport" id="AT1G17120"/>
<dbReference type="TAIR" id="AT1G17120">
    <property type="gene designation" value="CAT8"/>
</dbReference>
<dbReference type="eggNOG" id="KOG1286">
    <property type="taxonomic scope" value="Eukaryota"/>
</dbReference>
<dbReference type="HOGENOM" id="CLU_007946_15_9_1"/>
<dbReference type="InParanoid" id="Q9SHH0"/>
<dbReference type="OMA" id="MKWARYV"/>
<dbReference type="PhylomeDB" id="Q9SHH0"/>
<dbReference type="PRO" id="PR:Q9SHH0"/>
<dbReference type="Proteomes" id="UP000006548">
    <property type="component" value="Chromosome 1"/>
</dbReference>
<dbReference type="ExpressionAtlas" id="Q9SHH0">
    <property type="expression patterns" value="baseline and differential"/>
</dbReference>
<dbReference type="GO" id="GO:0043231">
    <property type="term" value="C:intracellular membrane-bounded organelle"/>
    <property type="evidence" value="ECO:0000314"/>
    <property type="project" value="TAIR"/>
</dbReference>
<dbReference type="GO" id="GO:0000325">
    <property type="term" value="C:plant-type vacuole"/>
    <property type="evidence" value="ECO:0007005"/>
    <property type="project" value="TAIR"/>
</dbReference>
<dbReference type="GO" id="GO:0005886">
    <property type="term" value="C:plasma membrane"/>
    <property type="evidence" value="ECO:0000314"/>
    <property type="project" value="TAIR"/>
</dbReference>
<dbReference type="GO" id="GO:0022857">
    <property type="term" value="F:transmembrane transporter activity"/>
    <property type="evidence" value="ECO:0007669"/>
    <property type="project" value="InterPro"/>
</dbReference>
<dbReference type="GO" id="GO:0006865">
    <property type="term" value="P:amino acid transport"/>
    <property type="evidence" value="ECO:0007669"/>
    <property type="project" value="UniProtKB-KW"/>
</dbReference>
<dbReference type="FunFam" id="1.20.1740.10:FF:000035">
    <property type="entry name" value="Cationic amino acid transporter 5"/>
    <property type="match status" value="1"/>
</dbReference>
<dbReference type="Gene3D" id="1.20.1740.10">
    <property type="entry name" value="Amino acid/polyamine transporter I"/>
    <property type="match status" value="1"/>
</dbReference>
<dbReference type="InterPro" id="IPR002293">
    <property type="entry name" value="AA/rel_permease1"/>
</dbReference>
<dbReference type="InterPro" id="IPR029485">
    <property type="entry name" value="CAT_C"/>
</dbReference>
<dbReference type="PANTHER" id="PTHR43243:SF62">
    <property type="entry name" value="CATIONIC AMINO ACID TRANSPORTER 8, VACUOLAR"/>
    <property type="match status" value="1"/>
</dbReference>
<dbReference type="PANTHER" id="PTHR43243">
    <property type="entry name" value="INNER MEMBRANE TRANSPORTER YGJI-RELATED"/>
    <property type="match status" value="1"/>
</dbReference>
<dbReference type="Pfam" id="PF13520">
    <property type="entry name" value="AA_permease_2"/>
    <property type="match status" value="1"/>
</dbReference>
<dbReference type="Pfam" id="PF13906">
    <property type="entry name" value="AA_permease_C"/>
    <property type="match status" value="1"/>
</dbReference>
<keyword id="KW-0029">Amino-acid transport</keyword>
<keyword id="KW-1003">Cell membrane</keyword>
<keyword id="KW-0325">Glycoprotein</keyword>
<keyword id="KW-0472">Membrane</keyword>
<keyword id="KW-1185">Reference proteome</keyword>
<keyword id="KW-0812">Transmembrane</keyword>
<keyword id="KW-1133">Transmembrane helix</keyword>
<keyword id="KW-0813">Transport</keyword>
<comment type="function">
    <text evidence="2">Permease involved in the transport of the cationic neutral or acidic amino acids.</text>
</comment>
<comment type="subcellular location">
    <subcellularLocation>
        <location evidence="2">Cell membrane</location>
        <topology evidence="2">Multi-pass membrane protein</topology>
    </subcellularLocation>
</comment>
<comment type="tissue specificity">
    <text evidence="2">Expressed in roots, stems, flowers and leaves. Mostly present in young and rapidly dividing tissues such as the shoot and root apical meristem, and in young leaves and petioles during seedling development.</text>
</comment>
<comment type="similarity">
    <text evidence="3">Belongs to the amino acid-polyamine-organocation (APC) superfamily. Cationic amino acid transporter (CAT) (TC 2.A.3.3) family.</text>
</comment>
<evidence type="ECO:0000255" key="1"/>
<evidence type="ECO:0000269" key="2">
    <source>
    </source>
</evidence>
<evidence type="ECO:0000305" key="3"/>
<organism>
    <name type="scientific">Arabidopsis thaliana</name>
    <name type="common">Mouse-ear cress</name>
    <dbReference type="NCBI Taxonomy" id="3702"/>
    <lineage>
        <taxon>Eukaryota</taxon>
        <taxon>Viridiplantae</taxon>
        <taxon>Streptophyta</taxon>
        <taxon>Embryophyta</taxon>
        <taxon>Tracheophyta</taxon>
        <taxon>Spermatophyta</taxon>
        <taxon>Magnoliopsida</taxon>
        <taxon>eudicotyledons</taxon>
        <taxon>Gunneridae</taxon>
        <taxon>Pentapetalae</taxon>
        <taxon>rosids</taxon>
        <taxon>malvids</taxon>
        <taxon>Brassicales</taxon>
        <taxon>Brassicaceae</taxon>
        <taxon>Camelineae</taxon>
        <taxon>Arabidopsis</taxon>
    </lineage>
</organism>
<sequence>MIPASMEEAHQLESRSDDLSQRRSYWRWRKQDFFPEFSFQSFSTYKSALSATCPRLADRLLSRSSDAYELDAARRESENPMRRCLTWWDLLWLSFGSVVGSGVFVITGQEARVGAGPAVVLSYAISGVSALLSVLCYAEFGVEIPVAGGSFSYLRVELGDFIAFIAAGNILLEAMVGAAGLGRSWSSYLASLVKNDSDYFRIKVDSFAKGFDLLDPVAVAVLLVANGIAMTGTKRTSWLNLITSMVTVCIIVFIVVVGFTHSKTSNLVPFFPYGAKGVVQSAAVVYWSYTGFDMVANMAEETEKPSRDIPIGLVGSMSMITVVYCLMALALTMMVKYTEIDANAAYSVAFAQIGMKWAKYLVGICALKGMTTSLLVGSLGQARYTTQIARSHMIPPWFALVHPKTGTPIYATLLVTILSSIISFFTSLEVLSSVFSFATLFIFMLVAVALLVRRYYVKDVTPEAGLLKFLGFLFLIIASSIGVSALWNSGVKGWIAYTVTGVIWFIGTLGLALLPKYRVPKVWGVPLVPWLPSFSIAMNLFLIGSLGYVAFLRFIICTMVMLLYYLFVGLHATYDVAHQPLEEAKFEGER</sequence>
<gene>
    <name type="primary">CAT8</name>
    <name type="ordered locus">At1g17120</name>
    <name type="ORF">F20D23.19</name>
</gene>
<accession>Q9SHH0</accession>
<proteinExistence type="evidence at transcript level"/>
<protein>
    <recommendedName>
        <fullName>Cationic amino acid transporter 8, vacuolar</fullName>
    </recommendedName>
</protein>
<feature type="chain" id="PRO_0000415784" description="Cationic amino acid transporter 8, vacuolar">
    <location>
        <begin position="1"/>
        <end position="590"/>
    </location>
</feature>
<feature type="topological domain" description="Cytoplasmic" evidence="1">
    <location>
        <begin position="1"/>
        <end position="85"/>
    </location>
</feature>
<feature type="transmembrane region" description="Helical" evidence="1">
    <location>
        <begin position="86"/>
        <end position="106"/>
    </location>
</feature>
<feature type="topological domain" description="Vacuolar" evidence="1">
    <location>
        <begin position="107"/>
        <end position="114"/>
    </location>
</feature>
<feature type="transmembrane region" description="Helical" evidence="1">
    <location>
        <begin position="115"/>
        <end position="135"/>
    </location>
</feature>
<feature type="topological domain" description="Cytoplasmic" evidence="1">
    <location>
        <begin position="136"/>
        <end position="160"/>
    </location>
</feature>
<feature type="transmembrane region" description="Helical" evidence="1">
    <location>
        <begin position="161"/>
        <end position="181"/>
    </location>
</feature>
<feature type="topological domain" description="Vacuolar" evidence="1">
    <location>
        <begin position="182"/>
        <end position="209"/>
    </location>
</feature>
<feature type="transmembrane region" description="Helical" evidence="1">
    <location>
        <begin position="210"/>
        <end position="230"/>
    </location>
</feature>
<feature type="topological domain" description="Cytoplasmic" evidence="1">
    <location>
        <begin position="231"/>
        <end position="238"/>
    </location>
</feature>
<feature type="transmembrane region" description="Helical" evidence="1">
    <location>
        <begin position="239"/>
        <end position="259"/>
    </location>
</feature>
<feature type="topological domain" description="Vacuolar" evidence="1">
    <location>
        <begin position="260"/>
        <end position="266"/>
    </location>
</feature>
<feature type="transmembrane region" description="Helical" evidence="1">
    <location>
        <begin position="267"/>
        <end position="287"/>
    </location>
</feature>
<feature type="topological domain" description="Cytoplasmic" evidence="1">
    <location>
        <begin position="288"/>
        <end position="310"/>
    </location>
</feature>
<feature type="transmembrane region" description="Helical" evidence="1">
    <location>
        <begin position="311"/>
        <end position="331"/>
    </location>
</feature>
<feature type="topological domain" description="Vacuolar" evidence="1">
    <location>
        <begin position="332"/>
        <end position="359"/>
    </location>
</feature>
<feature type="transmembrane region" description="Helical" evidence="1">
    <location>
        <begin position="360"/>
        <end position="380"/>
    </location>
</feature>
<feature type="topological domain" description="Cytoplasmic" evidence="1">
    <location>
        <begin position="381"/>
        <end position="407"/>
    </location>
</feature>
<feature type="transmembrane region" description="Helical" evidence="1">
    <location>
        <begin position="408"/>
        <end position="428"/>
    </location>
</feature>
<feature type="topological domain" description="Vacuolar" evidence="1">
    <location>
        <position position="429"/>
    </location>
</feature>
<feature type="transmembrane region" description="Helical" evidence="1">
    <location>
        <begin position="430"/>
        <end position="450"/>
    </location>
</feature>
<feature type="topological domain" description="Cytoplasmic" evidence="1">
    <location>
        <begin position="451"/>
        <end position="465"/>
    </location>
</feature>
<feature type="transmembrane region" description="Helical" evidence="1">
    <location>
        <begin position="466"/>
        <end position="486"/>
    </location>
</feature>
<feature type="topological domain" description="Vacuolar" evidence="1">
    <location>
        <begin position="487"/>
        <end position="493"/>
    </location>
</feature>
<feature type="transmembrane region" description="Helical" evidence="1">
    <location>
        <begin position="494"/>
        <end position="514"/>
    </location>
</feature>
<feature type="topological domain" description="Cytoplasmic" evidence="1">
    <location>
        <begin position="515"/>
        <end position="522"/>
    </location>
</feature>
<feature type="transmembrane region" description="Helical" evidence="1">
    <location>
        <begin position="523"/>
        <end position="543"/>
    </location>
</feature>
<feature type="topological domain" description="Vacuolar" evidence="1">
    <location>
        <begin position="544"/>
        <end position="553"/>
    </location>
</feature>
<feature type="transmembrane region" description="Helical" evidence="1">
    <location>
        <begin position="554"/>
        <end position="574"/>
    </location>
</feature>
<feature type="topological domain" description="Cytoplasmic" evidence="1">
    <location>
        <begin position="575"/>
        <end position="590"/>
    </location>
</feature>
<feature type="glycosylation site" description="N-linked (GlcNAc...) asparagine" evidence="1">
    <location>
        <position position="195"/>
    </location>
</feature>
<name>CAAT8_ARATH</name>